<protein>
    <recommendedName>
        <fullName>Capsid protein</fullName>
        <shortName>CP</shortName>
    </recommendedName>
    <alternativeName>
        <fullName>Coat protein</fullName>
    </alternativeName>
</protein>
<sequence length="130" mass="13867">MASNFEEFVLVDNGGTGDVKVAPSNFANGVAEWISSNSRSQAYKVTCSVRQSSANNRKYTVKVEVPKVATQVQGGVELPVAAWRSYMNMELTIPVFATNDDCALIVKALQGTFKTGNPIATAIAANSGIY</sequence>
<keyword id="KW-0002">3D-structure</keyword>
<keyword id="KW-0167">Capsid protein</keyword>
<keyword id="KW-0903">Direct protein sequencing</keyword>
<keyword id="KW-0694">RNA-binding</keyword>
<keyword id="KW-1142">T=3 icosahedral capsid protein</keyword>
<keyword id="KW-0810">Translation regulation</keyword>
<keyword id="KW-0946">Virion</keyword>
<reference key="1">
    <citation type="journal article" date="1986" name="Bioorg. Khim.">
        <title>Primary structure of a fragment of cDNA from phage fr.</title>
        <authorList>
            <person name="Berzin V.M."/>
            <person name="Avots A.J."/>
            <person name="Jansone I.V."/>
            <person name="Tsimanis A.J."/>
        </authorList>
    </citation>
    <scope>NUCLEOTIDE SEQUENCE</scope>
</reference>
<reference key="2">
    <citation type="journal article" date="1987" name="Nucleic Acids Res.">
        <title>Sequence of the genes coding for the A-protein and coat protein of bacteriophage fr.</title>
        <authorList>
            <person name="Berzin V.M."/>
            <person name="Avots A.J."/>
            <person name="Jansone I.V."/>
            <person name="Gintnere L."/>
            <person name="Tsimanis A.J."/>
        </authorList>
    </citation>
    <scope>NUCLEOTIDE SEQUENCE</scope>
</reference>
<reference key="3">
    <citation type="journal article" date="1990" name="Biochim. Biophys. Acta">
        <title>Complete nucleotide sequence of the group I RNA bacteriophage fr.</title>
        <authorList>
            <person name="Adhin M.R."/>
            <person name="Avots A.J."/>
            <person name="Berzin V.M."/>
            <person name="Overbeek G.P."/>
            <person name="van Duin J."/>
        </authorList>
    </citation>
    <scope>NUCLEOTIDE SEQUENCE [MRNA]</scope>
</reference>
<reference key="4">
    <citation type="journal article" date="1967" name="Mol. Gen. Genet.">
        <title>Coat proteins of strains of two RNA viruses: comparison of their amino acid sequences.</title>
        <authorList>
            <person name="Wittmann-Liebold B."/>
            <person name="Wittmann H.G."/>
        </authorList>
    </citation>
    <scope>PROTEIN SEQUENCE OF 2-130</scope>
</reference>
<reference key="5">
    <citation type="journal article" date="1994" name="J. Mol. Biol.">
        <title>Crystal structure of bacteriophage fr capsids at 3.5-A resolution.</title>
        <authorList>
            <person name="Liljas L."/>
            <person name="Fridborg K."/>
            <person name="Valegaard K."/>
            <person name="Bundule M."/>
            <person name="Pumpens P."/>
        </authorList>
    </citation>
    <scope>X-RAY CRYSTALLOGRAPHY (3.5 ANGSTROMS)</scope>
</reference>
<reference key="6">
    <citation type="journal article" date="1998" name="Virology">
        <title>Structure of phage fr capsids with a deletion in the FG loop: implications for viral assembly.</title>
        <authorList>
            <person name="Axblom C."/>
            <person name="Tars K."/>
            <person name="Fridborg K."/>
            <person name="Orna L."/>
            <person name="Bundule M."/>
            <person name="Liljas L."/>
        </authorList>
    </citation>
    <scope>X-RAY CRYSTALLOGRAPHY (3.5 ANGSTROMS)</scope>
</reference>
<proteinExistence type="evidence at protein level"/>
<name>CAPSD_BPFR</name>
<organism>
    <name type="scientific">Enterobacteria phage fr</name>
    <name type="common">Bacteriophage fr</name>
    <dbReference type="NCBI Taxonomy" id="12017"/>
    <lineage>
        <taxon>Viruses</taxon>
        <taxon>Riboviria</taxon>
        <taxon>Orthornavirae</taxon>
        <taxon>Lenarviricota</taxon>
        <taxon>Leviviricetes</taxon>
        <taxon>Norzivirales</taxon>
        <taxon>Fiersviridae</taxon>
        <taxon>Emesvirus</taxon>
        <taxon>Emesvirus zinderi</taxon>
    </lineage>
</organism>
<organismHost>
    <name type="scientific">Escherichia coli</name>
    <dbReference type="NCBI Taxonomy" id="562"/>
</organismHost>
<dbReference type="EMBL" id="M31635">
    <property type="protein sequence ID" value="AAA32189.1"/>
    <property type="molecule type" value="Genomic_RNA"/>
</dbReference>
<dbReference type="EMBL" id="X15031">
    <property type="protein sequence ID" value="CAA33136.1"/>
    <property type="molecule type" value="mRNA"/>
</dbReference>
<dbReference type="PIR" id="S08018">
    <property type="entry name" value="VCBPFR"/>
</dbReference>
<dbReference type="PDB" id="1FR5">
    <property type="method" value="X-ray"/>
    <property type="resolution" value="3.50 A"/>
    <property type="chains" value="A/B/C=2-130"/>
</dbReference>
<dbReference type="PDB" id="1FRS">
    <property type="method" value="X-ray"/>
    <property type="resolution" value="3.50 A"/>
    <property type="chains" value="A/B/C=2-130"/>
</dbReference>
<dbReference type="PDBsum" id="1FR5"/>
<dbReference type="PDBsum" id="1FRS"/>
<dbReference type="SMR" id="P03614"/>
<dbReference type="EvolutionaryTrace" id="P03614"/>
<dbReference type="Proteomes" id="UP000002582">
    <property type="component" value="Genome"/>
</dbReference>
<dbReference type="GO" id="GO:0039617">
    <property type="term" value="C:T=3 icosahedral viral capsid"/>
    <property type="evidence" value="ECO:0007669"/>
    <property type="project" value="UniProtKB-KW"/>
</dbReference>
<dbReference type="GO" id="GO:0003723">
    <property type="term" value="F:RNA binding"/>
    <property type="evidence" value="ECO:0007669"/>
    <property type="project" value="UniProtKB-KW"/>
</dbReference>
<dbReference type="GO" id="GO:0005198">
    <property type="term" value="F:structural molecule activity"/>
    <property type="evidence" value="ECO:0007669"/>
    <property type="project" value="InterPro"/>
</dbReference>
<dbReference type="GO" id="GO:0006417">
    <property type="term" value="P:regulation of translation"/>
    <property type="evidence" value="ECO:0007669"/>
    <property type="project" value="UniProtKB-KW"/>
</dbReference>
<dbReference type="Gene3D" id="3.30.380.10">
    <property type="entry name" value="MS2 Viral Coat Protein"/>
    <property type="match status" value="1"/>
</dbReference>
<dbReference type="InterPro" id="IPR002703">
    <property type="entry name" value="Levivir_coat"/>
</dbReference>
<dbReference type="InterPro" id="IPR015954">
    <property type="entry name" value="Phage_RNA-type_capsid"/>
</dbReference>
<dbReference type="Pfam" id="PF01819">
    <property type="entry name" value="Levi_coat"/>
    <property type="match status" value="1"/>
</dbReference>
<dbReference type="SUPFAM" id="SSF55405">
    <property type="entry name" value="RNA bacteriophage capsid protein"/>
    <property type="match status" value="1"/>
</dbReference>
<accession>P03614</accession>
<comment type="function">
    <text evidence="1">Capsid protein self-assembles to form an icosahedral capsid with a T=3 symmetry, about 26 nm in diameter, and consisting of 89 capsid proteins dimers (178 capsid proteins). Involved in viral genome encapsidation through the interaction between a capsid protein dimer and the multiple packaging signals present in the RNA genome. The capsid also contains 1 copy of the A2 maturation protein.</text>
</comment>
<comment type="function">
    <text evidence="1">Acts as a translational repressor of viral replicase synthesis late in infection. This latter function is the result of capsid protein interaction with an RNA hairpin which contains the replicase ribosome-binding site.</text>
</comment>
<comment type="subunit">
    <text evidence="1">Homodimer. The capsid proteins form dimers that assemble by group of 5. Twelve such pentamers are linked together with free dimers. The homodimers binds to the viral RNA via an operator hairpin, but also to many other RNA sequences in the viral genome; this interaction probably shifts the virus from the replicative to the assembly phase and ensures specific encapsidation of the viral genome.</text>
</comment>
<comment type="subcellular location">
    <subcellularLocation>
        <location evidence="1">Virion</location>
    </subcellularLocation>
    <text evidence="1">The shell is composed of 178 copies of the capsid protein and 1 copy of the maturation protein.</text>
</comment>
<comment type="similarity">
    <text evidence="3">Belongs to the Leviviricetes capsid protein family.</text>
</comment>
<comment type="online information" name="Virus Particle ExploreR db">
    <link uri="https://viperdb.org/Info_Page.php?VDB=1fr5"/>
    <text>Icosahedral capsid structure</text>
</comment>
<comment type="online information" name="Virus Particle ExploreR db">
    <link uri="https://viperdb.org/Info_Page.php?VDB=1frs"/>
    <text>Icosahedral capsid structure</text>
</comment>
<evidence type="ECO:0000250" key="1">
    <source>
        <dbReference type="UniProtKB" id="P03612"/>
    </source>
</evidence>
<evidence type="ECO:0000269" key="2">
    <source>
    </source>
</evidence>
<evidence type="ECO:0000305" key="3"/>
<evidence type="ECO:0007829" key="4">
    <source>
        <dbReference type="PDB" id="1FR5"/>
    </source>
</evidence>
<feature type="initiator methionine" description="Removed; by host" evidence="2">
    <location>
        <position position="1"/>
    </location>
</feature>
<feature type="chain" id="PRO_0000164840" description="Capsid protein">
    <location>
        <begin position="2"/>
        <end position="130"/>
    </location>
</feature>
<feature type="region of interest" description="Viral RNA-binding" evidence="1">
    <location>
        <begin position="32"/>
        <end position="105"/>
    </location>
</feature>
<feature type="sequence conflict" description="In Ref. 4; AA sequence." evidence="3" ref="4">
    <original>DN</original>
    <variation>ND</variation>
    <location>
        <begin position="12"/>
        <end position="13"/>
    </location>
</feature>
<feature type="sequence conflict" description="In Ref. 4; AA sequence." evidence="3" ref="4">
    <original>NPIA</original>
    <variation>IAPN</variation>
    <location>
        <begin position="117"/>
        <end position="120"/>
    </location>
</feature>
<feature type="strand" evidence="4">
    <location>
        <begin position="8"/>
        <end position="11"/>
    </location>
</feature>
<feature type="strand" evidence="4">
    <location>
        <begin position="19"/>
        <end position="25"/>
    </location>
</feature>
<feature type="helix" evidence="4">
    <location>
        <begin position="27"/>
        <end position="29"/>
    </location>
</feature>
<feature type="strand" evidence="4">
    <location>
        <begin position="31"/>
        <end position="34"/>
    </location>
</feature>
<feature type="helix" evidence="4">
    <location>
        <begin position="39"/>
        <end position="41"/>
    </location>
</feature>
<feature type="strand" evidence="4">
    <location>
        <begin position="44"/>
        <end position="50"/>
    </location>
</feature>
<feature type="strand" evidence="4">
    <location>
        <begin position="53"/>
        <end position="68"/>
    </location>
</feature>
<feature type="strand" evidence="4">
    <location>
        <begin position="75"/>
        <end position="78"/>
    </location>
</feature>
<feature type="strand" evidence="4">
    <location>
        <begin position="81"/>
        <end position="94"/>
    </location>
</feature>
<feature type="helix" evidence="4">
    <location>
        <begin position="99"/>
        <end position="112"/>
    </location>
</feature>
<feature type="helix" evidence="4">
    <location>
        <begin position="118"/>
        <end position="123"/>
    </location>
</feature>
<feature type="turn" evidence="4">
    <location>
        <begin position="124"/>
        <end position="126"/>
    </location>
</feature>